<organism>
    <name type="scientific">Arabidopsis thaliana</name>
    <name type="common">Mouse-ear cress</name>
    <dbReference type="NCBI Taxonomy" id="3702"/>
    <lineage>
        <taxon>Eukaryota</taxon>
        <taxon>Viridiplantae</taxon>
        <taxon>Streptophyta</taxon>
        <taxon>Embryophyta</taxon>
        <taxon>Tracheophyta</taxon>
        <taxon>Spermatophyta</taxon>
        <taxon>Magnoliopsida</taxon>
        <taxon>eudicotyledons</taxon>
        <taxon>Gunneridae</taxon>
        <taxon>Pentapetalae</taxon>
        <taxon>rosids</taxon>
        <taxon>malvids</taxon>
        <taxon>Brassicales</taxon>
        <taxon>Brassicaceae</taxon>
        <taxon>Camelineae</taxon>
        <taxon>Arabidopsis</taxon>
    </lineage>
</organism>
<feature type="signal peptide" evidence="1">
    <location>
        <begin position="1"/>
        <end position="22"/>
    </location>
</feature>
<feature type="chain" id="PRO_0000400105" description="High-affinity nitrate transporter 3.1">
    <location>
        <begin position="23"/>
        <end position="210"/>
    </location>
</feature>
<feature type="transmembrane region" description="Helical" evidence="1">
    <location>
        <begin position="178"/>
        <end position="198"/>
    </location>
</feature>
<feature type="mutagenesis site" description="In rnc1; decreased nitrate uptake and accumulation." evidence="3">
    <original>D</original>
    <variation>N</variation>
    <location>
        <position position="105"/>
    </location>
</feature>
<feature type="sequence conflict" description="In Ref. 1; CAC36942 and 4; AAM62807." evidence="9" ref="1 4">
    <original>V</original>
    <variation>L</variation>
    <location>
        <position position="26"/>
    </location>
</feature>
<feature type="sequence conflict" description="In Ref. 4; AAM62807." evidence="9" ref="4">
    <original>L</original>
    <variation>F</variation>
    <location>
        <position position="102"/>
    </location>
</feature>
<evidence type="ECO:0000255" key="1"/>
<evidence type="ECO:0000269" key="2">
    <source>
    </source>
</evidence>
<evidence type="ECO:0000269" key="3">
    <source>
    </source>
</evidence>
<evidence type="ECO:0000269" key="4">
    <source>
    </source>
</evidence>
<evidence type="ECO:0000269" key="5">
    <source>
    </source>
</evidence>
<evidence type="ECO:0000269" key="6">
    <source>
    </source>
</evidence>
<evidence type="ECO:0000269" key="7">
    <source>
    </source>
</evidence>
<evidence type="ECO:0000269" key="8">
    <source>
    </source>
</evidence>
<evidence type="ECO:0000305" key="9"/>
<protein>
    <recommendedName>
        <fullName>High-affinity nitrate transporter 3.1</fullName>
    </recommendedName>
    <alternativeName>
        <fullName>Protein WOUND-RESPONSIVE 3</fullName>
    </alternativeName>
</protein>
<sequence>MAIQKILFASLLICSLIQSIHGAEKVRLFKELDKGALDVTTKPSREGPGVVLDAGKDTLNITWTLSSIGSKREAEFKIIKVKLCYAPPSQVDRPWRKTHDELFKDKTCPHKIIAKPYDKTLQSTTWTLERDIPTGTYFVRAYAVDAIGHEVAYGQSTDDAKKTNLFSVQAISGRHASLDIASICFSVFSVVALVVFFVNEKRKAKIEQSK</sequence>
<gene>
    <name type="primary">NRT3.1</name>
    <name type="synonym">NAR2.1</name>
    <name type="synonym">NAR2.2</name>
    <name type="synonym">WR3</name>
    <name type="ordered locus">At5g50200</name>
    <name type="ORF">K6A12.6</name>
</gene>
<accession>Q9FGS5</accession>
<accession>Q8LE73</accession>
<accession>Q9ARM2</accession>
<reference key="1">
    <citation type="submission" date="2001-04" db="EMBL/GenBank/DDBJ databases">
        <title>Functional Expression and kinetic Characterisation of Nar2 gene of Arabidopsis in Xenopus oocyte.</title>
        <authorList>
            <person name="Zhou J.J."/>
            <person name="Fernandez E."/>
            <person name="Forde B.G."/>
            <person name="Miller A.J."/>
        </authorList>
    </citation>
    <scope>NUCLEOTIDE SEQUENCE [MRNA]</scope>
</reference>
<reference key="2">
    <citation type="journal article" date="2000" name="DNA Res.">
        <title>Structural analysis of Arabidopsis thaliana chromosome 5. X. Sequence features of the regions of 3,076,755 bp covered by sixty P1 and TAC clones.</title>
        <authorList>
            <person name="Sato S."/>
            <person name="Nakamura Y."/>
            <person name="Kaneko T."/>
            <person name="Katoh T."/>
            <person name="Asamizu E."/>
            <person name="Kotani H."/>
            <person name="Tabata S."/>
        </authorList>
    </citation>
    <scope>NUCLEOTIDE SEQUENCE [LARGE SCALE GENOMIC DNA]</scope>
    <source>
        <strain>cv. Columbia</strain>
    </source>
</reference>
<reference key="3">
    <citation type="journal article" date="2017" name="Plant J.">
        <title>Araport11: a complete reannotation of the Arabidopsis thaliana reference genome.</title>
        <authorList>
            <person name="Cheng C.Y."/>
            <person name="Krishnakumar V."/>
            <person name="Chan A.P."/>
            <person name="Thibaud-Nissen F."/>
            <person name="Schobel S."/>
            <person name="Town C.D."/>
        </authorList>
    </citation>
    <scope>GENOME REANNOTATION</scope>
    <source>
        <strain>cv. Columbia</strain>
    </source>
</reference>
<reference key="4">
    <citation type="submission" date="2002-03" db="EMBL/GenBank/DDBJ databases">
        <title>Full-length cDNA from Arabidopsis thaliana.</title>
        <authorList>
            <person name="Brover V.V."/>
            <person name="Troukhan M.E."/>
            <person name="Alexandrov N.A."/>
            <person name="Lu Y.-P."/>
            <person name="Flavell R.B."/>
            <person name="Feldmann K.A."/>
        </authorList>
    </citation>
    <scope>NUCLEOTIDE SEQUENCE [LARGE SCALE MRNA]</scope>
</reference>
<reference key="5">
    <citation type="journal article" date="2006" name="Plant Cell Physiol.">
        <title>Repression of nitrate uptake by replacement of Asp105 by asparagine in AtNRT3.1 in Arabidopsis thaliana L.</title>
        <authorList>
            <person name="Kawachi T."/>
            <person name="Sunaga Y."/>
            <person name="Ebato M."/>
            <person name="Hatanaka T."/>
            <person name="Harada H."/>
        </authorList>
    </citation>
    <scope>MUTAGENESIS OF ASP-105</scope>
</reference>
<reference key="6">
    <citation type="journal article" date="2006" name="Plant Physiol.">
        <title>High-affinity nitrate transport in roots of Arabidopsis depends on expression of the NAR2-like gene AtNRT3.1.</title>
        <authorList>
            <person name="Okamoto M."/>
            <person name="Kumar A."/>
            <person name="Li W."/>
            <person name="Wang Y."/>
            <person name="Siddiqi M.Y."/>
            <person name="Crawford N.M."/>
            <person name="Glass A.D."/>
        </authorList>
    </citation>
    <scope>FUNCTION</scope>
    <scope>TISSUE SPECIFICITY</scope>
    <scope>INDUCTION BY NITRATE</scope>
    <scope>DISRUPTION PHENOTYPE</scope>
</reference>
<reference key="7">
    <citation type="journal article" date="2006" name="Plant Physiol.">
        <title>Characterization of a two-component high-affinity nitrate uptake system in Arabidopsis. Physiology and protein-protein interaction.</title>
        <authorList>
            <person name="Orsel M."/>
            <person name="Chopin F."/>
            <person name="Leleu O."/>
            <person name="Smith S.J."/>
            <person name="Krapp A."/>
            <person name="Daniel-Vedele F."/>
            <person name="Miller A.J."/>
        </authorList>
    </citation>
    <scope>FUNCTION</scope>
    <scope>INTERACTION WITH NRT2.1 AND NRT2.3</scope>
    <scope>INDUCTION</scope>
    <scope>DISRUPTION PHENOTYPE</scope>
</reference>
<reference key="8">
    <citation type="journal article" date="2007" name="J. Biol. Chem.">
        <title>Regulation of root nitrate uptake at the NRT2.1 protein level in Arabidopsis thaliana.</title>
        <authorList>
            <person name="Wirth J."/>
            <person name="Chopin F."/>
            <person name="Santoni V."/>
            <person name="Viennois G."/>
            <person name="Tillard P."/>
            <person name="Krapp A."/>
            <person name="Lejay L."/>
            <person name="Daniel-Vedele F."/>
            <person name="Gojon A."/>
        </authorList>
    </citation>
    <scope>FUNCTION</scope>
</reference>
<reference key="9">
    <citation type="journal article" date="2007" name="Plant Signal. Behav.">
        <title>Nitrate signaling and the two component high affinity uptake system in Arabidopsis.</title>
        <authorList>
            <person name="Orsel M."/>
            <person name="Chopin F."/>
            <person name="Leleu O."/>
            <person name="Smith S.J."/>
            <person name="Krapp A."/>
            <person name="Daniel-Vedele F."/>
            <person name="Miller A.J."/>
        </authorList>
    </citation>
    <scope>FUNCTION</scope>
</reference>
<reference key="10">
    <citation type="journal article" date="2010" name="Plant J.">
        <title>Characterization of an intact two-component high-affinity nitrate transporter from Arabidopsis roots.</title>
        <authorList>
            <person name="Yong Z."/>
            <person name="Kotur Z."/>
            <person name="Glass A.D."/>
        </authorList>
    </citation>
    <scope>SUBCELLULAR LOCATION</scope>
    <scope>SUBUNIT</scope>
    <scope>INTERACTION WITH NRT2.1</scope>
</reference>
<reference key="11">
    <citation type="journal article" date="2012" name="New Phytol.">
        <title>Nitrate transport capacity of the Arabidopsis thaliana NRT2 family members and their interactions with AtNAR2.1.</title>
        <authorList>
            <person name="Kotur Z."/>
            <person name="Mackenzie N."/>
            <person name="Ramesh S."/>
            <person name="Tyerman S.D."/>
            <person name="Kaiser B.N."/>
            <person name="Glass A.D."/>
        </authorList>
    </citation>
    <scope>INTERACTION WITH NRT2 TRANSPORTERS</scope>
</reference>
<comment type="function">
    <text evidence="2 4 5 6">Acts as a dual component transporter with NTR2.1. Required for high-affinity nitrate transport. Acts as a repressor of lateral root initiation. May be involved in targeting NRT2 proteins to the plasma membrane.</text>
</comment>
<comment type="subunit">
    <text evidence="4 7 8">Heterotetramer composed of two NRT2.1 and two NRT3.1 (PubMed:20561257). Interacts with NRT2.1 and NRT2.3 (PubMed:17012411). Interacts with all other NRT2 transporters, including NRT2.5 (PubMed:22432443).</text>
</comment>
<comment type="subcellular location">
    <subcellularLocation>
        <location evidence="7">Cell membrane</location>
        <topology evidence="7">Single-pass membrane protein</topology>
    </subcellularLocation>
</comment>
<comment type="tissue specificity">
    <text evidence="2">Highly expressed in roots. Detected in shoots.</text>
</comment>
<comment type="induction">
    <text evidence="2 4">Up-regulated in roots by nitrate. No effect in shoots. Induced by sudden N starvation and by low nitrate concentration.</text>
</comment>
<comment type="disruption phenotype">
    <text evidence="2 4">No visible phenotype when grown under normal conditions. Reduced growth on low-nitrate media.</text>
</comment>
<comment type="similarity">
    <text evidence="9">Belongs to the NAR2 family.</text>
</comment>
<keyword id="KW-1003">Cell membrane</keyword>
<keyword id="KW-0472">Membrane</keyword>
<keyword id="KW-0534">Nitrate assimilation</keyword>
<keyword id="KW-1185">Reference proteome</keyword>
<keyword id="KW-0732">Signal</keyword>
<keyword id="KW-0812">Transmembrane</keyword>
<keyword id="KW-1133">Transmembrane helix</keyword>
<proteinExistence type="evidence at protein level"/>
<name>NRT31_ARATH</name>
<dbReference type="EMBL" id="AJ310933">
    <property type="protein sequence ID" value="CAC36942.1"/>
    <property type="molecule type" value="mRNA"/>
</dbReference>
<dbReference type="EMBL" id="AJ311926">
    <property type="protein sequence ID" value="CAC36292.1"/>
    <property type="molecule type" value="mRNA"/>
</dbReference>
<dbReference type="EMBL" id="AB024031">
    <property type="protein sequence ID" value="BAB09391.1"/>
    <property type="molecule type" value="Genomic_DNA"/>
</dbReference>
<dbReference type="EMBL" id="CP002688">
    <property type="protein sequence ID" value="AED95909.1"/>
    <property type="molecule type" value="Genomic_DNA"/>
</dbReference>
<dbReference type="EMBL" id="CP002688">
    <property type="protein sequence ID" value="AED95910.1"/>
    <property type="molecule type" value="Genomic_DNA"/>
</dbReference>
<dbReference type="EMBL" id="CP002688">
    <property type="protein sequence ID" value="AED95911.1"/>
    <property type="molecule type" value="Genomic_DNA"/>
</dbReference>
<dbReference type="EMBL" id="AY085586">
    <property type="protein sequence ID" value="AAM62807.1"/>
    <property type="molecule type" value="mRNA"/>
</dbReference>
<dbReference type="RefSeq" id="NP_199831.1">
    <property type="nucleotide sequence ID" value="NM_124399.3"/>
</dbReference>
<dbReference type="RefSeq" id="NP_851159.1">
    <property type="nucleotide sequence ID" value="NM_180828.2"/>
</dbReference>
<dbReference type="RefSeq" id="NP_851160.1">
    <property type="nucleotide sequence ID" value="NM_180829.1"/>
</dbReference>
<dbReference type="BioGRID" id="20331">
    <property type="interactions" value="6"/>
</dbReference>
<dbReference type="FunCoup" id="Q9FGS5">
    <property type="interactions" value="250"/>
</dbReference>
<dbReference type="IntAct" id="Q9FGS5">
    <property type="interactions" value="3"/>
</dbReference>
<dbReference type="STRING" id="3702.Q9FGS5"/>
<dbReference type="TCDB" id="8.A.20.1.1">
    <property type="family name" value="the plant/algal/chlorella nitrate transporter accessory protein (nar2,1) family"/>
</dbReference>
<dbReference type="PaxDb" id="3702-AT5G50200.2"/>
<dbReference type="ProteomicsDB" id="250572"/>
<dbReference type="EnsemblPlants" id="AT5G50200.1">
    <property type="protein sequence ID" value="AT5G50200.1"/>
    <property type="gene ID" value="AT5G50200"/>
</dbReference>
<dbReference type="EnsemblPlants" id="AT5G50200.2">
    <property type="protein sequence ID" value="AT5G50200.2"/>
    <property type="gene ID" value="AT5G50200"/>
</dbReference>
<dbReference type="EnsemblPlants" id="AT5G50200.3">
    <property type="protein sequence ID" value="AT5G50200.3"/>
    <property type="gene ID" value="AT5G50200"/>
</dbReference>
<dbReference type="GeneID" id="835085"/>
<dbReference type="Gramene" id="AT5G50200.1">
    <property type="protein sequence ID" value="AT5G50200.1"/>
    <property type="gene ID" value="AT5G50200"/>
</dbReference>
<dbReference type="Gramene" id="AT5G50200.2">
    <property type="protein sequence ID" value="AT5G50200.2"/>
    <property type="gene ID" value="AT5G50200"/>
</dbReference>
<dbReference type="Gramene" id="AT5G50200.3">
    <property type="protein sequence ID" value="AT5G50200.3"/>
    <property type="gene ID" value="AT5G50200"/>
</dbReference>
<dbReference type="KEGG" id="ath:AT5G50200"/>
<dbReference type="Araport" id="AT5G50200"/>
<dbReference type="TAIR" id="AT5G50200">
    <property type="gene designation" value="WR3"/>
</dbReference>
<dbReference type="eggNOG" id="ENOG502RXTZ">
    <property type="taxonomic scope" value="Eukaryota"/>
</dbReference>
<dbReference type="HOGENOM" id="CLU_093989_0_0_1"/>
<dbReference type="InParanoid" id="Q9FGS5"/>
<dbReference type="OMA" id="ANDHEVA"/>
<dbReference type="PhylomeDB" id="Q9FGS5"/>
<dbReference type="PRO" id="PR:Q9FGS5"/>
<dbReference type="Proteomes" id="UP000006548">
    <property type="component" value="Chromosome 5"/>
</dbReference>
<dbReference type="ExpressionAtlas" id="Q9FGS5">
    <property type="expression patterns" value="baseline and differential"/>
</dbReference>
<dbReference type="GO" id="GO:0005886">
    <property type="term" value="C:plasma membrane"/>
    <property type="evidence" value="ECO:0007005"/>
    <property type="project" value="TAIR"/>
</dbReference>
<dbReference type="GO" id="GO:0015112">
    <property type="term" value="F:nitrate transmembrane transporter activity"/>
    <property type="evidence" value="ECO:0000315"/>
    <property type="project" value="TAIR"/>
</dbReference>
<dbReference type="GO" id="GO:0042128">
    <property type="term" value="P:nitrate assimilation"/>
    <property type="evidence" value="ECO:0007669"/>
    <property type="project" value="UniProtKB-KW"/>
</dbReference>
<dbReference type="GO" id="GO:0015706">
    <property type="term" value="P:nitrate transmembrane transport"/>
    <property type="evidence" value="ECO:0000315"/>
    <property type="project" value="TAIR"/>
</dbReference>
<dbReference type="GO" id="GO:0010167">
    <property type="term" value="P:response to nitrate"/>
    <property type="evidence" value="ECO:0000270"/>
    <property type="project" value="TAIR"/>
</dbReference>
<dbReference type="GO" id="GO:0009611">
    <property type="term" value="P:response to wounding"/>
    <property type="evidence" value="ECO:0000270"/>
    <property type="project" value="TAIR"/>
</dbReference>
<dbReference type="InterPro" id="IPR016605">
    <property type="entry name" value="Transptr_NO3_Nar2"/>
</dbReference>
<dbReference type="PANTHER" id="PTHR34806:SF1">
    <property type="entry name" value="HIGH-AFFINITY NITRATE TRANSPORTER 3.1"/>
    <property type="match status" value="1"/>
</dbReference>
<dbReference type="PANTHER" id="PTHR34806">
    <property type="entry name" value="HIGH-AFFINITY NITRATE TRANSPORTER 3.2"/>
    <property type="match status" value="1"/>
</dbReference>
<dbReference type="Pfam" id="PF16974">
    <property type="entry name" value="NAR2"/>
    <property type="match status" value="1"/>
</dbReference>
<dbReference type="PIRSF" id="PIRSF012939">
    <property type="entry name" value="Transpt_NO3_Nar2"/>
    <property type="match status" value="1"/>
</dbReference>